<proteinExistence type="inferred from homology"/>
<feature type="chain" id="PRO_0000179195" description="UDP-N-acetylenolpyruvoylglucosamine reductase">
    <location>
        <begin position="1"/>
        <end position="296"/>
    </location>
</feature>
<feature type="domain" description="FAD-binding PCMH-type">
    <location>
        <begin position="22"/>
        <end position="187"/>
    </location>
</feature>
<feature type="active site" evidence="1">
    <location>
        <position position="166"/>
    </location>
</feature>
<feature type="active site" description="Proton donor" evidence="1">
    <location>
        <position position="214"/>
    </location>
</feature>
<feature type="active site" evidence="1">
    <location>
        <position position="283"/>
    </location>
</feature>
<organism>
    <name type="scientific">Chlamydia muridarum (strain MoPn / Nigg)</name>
    <dbReference type="NCBI Taxonomy" id="243161"/>
    <lineage>
        <taxon>Bacteria</taxon>
        <taxon>Pseudomonadati</taxon>
        <taxon>Chlamydiota</taxon>
        <taxon>Chlamydiia</taxon>
        <taxon>Chlamydiales</taxon>
        <taxon>Chlamydiaceae</taxon>
        <taxon>Chlamydia/Chlamydophila group</taxon>
        <taxon>Chlamydia</taxon>
    </lineage>
</organism>
<keyword id="KW-0131">Cell cycle</keyword>
<keyword id="KW-0132">Cell division</keyword>
<keyword id="KW-0133">Cell shape</keyword>
<keyword id="KW-0961">Cell wall biogenesis/degradation</keyword>
<keyword id="KW-0963">Cytoplasm</keyword>
<keyword id="KW-0274">FAD</keyword>
<keyword id="KW-0285">Flavoprotein</keyword>
<keyword id="KW-0521">NADP</keyword>
<keyword id="KW-0560">Oxidoreductase</keyword>
<keyword id="KW-0573">Peptidoglycan synthesis</keyword>
<comment type="function">
    <text evidence="1">Cell wall formation.</text>
</comment>
<comment type="catalytic activity">
    <reaction>
        <text>UDP-N-acetyl-alpha-D-muramate + NADP(+) = UDP-N-acetyl-3-O-(1-carboxyvinyl)-alpha-D-glucosamine + NADPH + H(+)</text>
        <dbReference type="Rhea" id="RHEA:12248"/>
        <dbReference type="ChEBI" id="CHEBI:15378"/>
        <dbReference type="ChEBI" id="CHEBI:57783"/>
        <dbReference type="ChEBI" id="CHEBI:58349"/>
        <dbReference type="ChEBI" id="CHEBI:68483"/>
        <dbReference type="ChEBI" id="CHEBI:70757"/>
        <dbReference type="EC" id="1.3.1.98"/>
    </reaction>
</comment>
<comment type="cofactor">
    <cofactor evidence="1">
        <name>FAD</name>
        <dbReference type="ChEBI" id="CHEBI:57692"/>
    </cofactor>
</comment>
<comment type="pathway">
    <text>Cell wall biogenesis; peptidoglycan biosynthesis.</text>
</comment>
<comment type="subcellular location">
    <subcellularLocation>
        <location evidence="1">Cytoplasm</location>
    </subcellularLocation>
</comment>
<comment type="similarity">
    <text evidence="2">Belongs to the MurB family.</text>
</comment>
<gene>
    <name type="primary">murB</name>
    <name type="ordered locus">TC_0218</name>
</gene>
<evidence type="ECO:0000250" key="1"/>
<evidence type="ECO:0000305" key="2"/>
<reference key="1">
    <citation type="journal article" date="2000" name="Nucleic Acids Res.">
        <title>Genome sequences of Chlamydia trachomatis MoPn and Chlamydia pneumoniae AR39.</title>
        <authorList>
            <person name="Read T.D."/>
            <person name="Brunham R.C."/>
            <person name="Shen C."/>
            <person name="Gill S.R."/>
            <person name="Heidelberg J.F."/>
            <person name="White O."/>
            <person name="Hickey E.K."/>
            <person name="Peterson J.D."/>
            <person name="Utterback T.R."/>
            <person name="Berry K.J."/>
            <person name="Bass S."/>
            <person name="Linher K.D."/>
            <person name="Weidman J.F."/>
            <person name="Khouri H.M."/>
            <person name="Craven B."/>
            <person name="Bowman C."/>
            <person name="Dodson R.J."/>
            <person name="Gwinn M.L."/>
            <person name="Nelson W.C."/>
            <person name="DeBoy R.T."/>
            <person name="Kolonay J.F."/>
            <person name="McClarty G."/>
            <person name="Salzberg S.L."/>
            <person name="Eisen J.A."/>
            <person name="Fraser C.M."/>
        </authorList>
    </citation>
    <scope>NUCLEOTIDE SEQUENCE [LARGE SCALE GENOMIC DNA]</scope>
    <source>
        <strain>MoPn / Nigg</strain>
    </source>
</reference>
<name>MURB_CHLMU</name>
<sequence length="296" mass="31882">MTNAFPFSVQESVPLNRFSTFRIGGPARYFKELVSVDEALKVFSFLHTSPIPYIIIGKGSNCLFHDQGFNGLVLYNNIQGQTFLSDTQIKVLSGVSFSLLGRQLSSKGFSGLEFAVGIPGTVGGAVFMNAGTALANTASSLVSVEIIDHAGNLLSLSREELLFSYRTSPFQKKTAFIVSATFQLTRDSQAAQRAKALIEERILKQPYEYPSVGCIFRNPEGVSAGALIDQAGLKGLTIGGGQISQKHGNFIINTGNASAADVLELIETIQKTLKQQGIALEKEVRIIPFQPNLGVS</sequence>
<dbReference type="EC" id="1.3.1.98"/>
<dbReference type="EMBL" id="AE002160">
    <property type="protein sequence ID" value="AAF39090.1"/>
    <property type="molecule type" value="Genomic_DNA"/>
</dbReference>
<dbReference type="PIR" id="H81726">
    <property type="entry name" value="H81726"/>
</dbReference>
<dbReference type="RefSeq" id="WP_010229846.1">
    <property type="nucleotide sequence ID" value="NZ_CP063055.1"/>
</dbReference>
<dbReference type="SMR" id="Q9PL89"/>
<dbReference type="GeneID" id="1246345"/>
<dbReference type="KEGG" id="cmu:TC_0218"/>
<dbReference type="eggNOG" id="COG0812">
    <property type="taxonomic scope" value="Bacteria"/>
</dbReference>
<dbReference type="HOGENOM" id="CLU_035304_1_1_0"/>
<dbReference type="OrthoDB" id="9804753at2"/>
<dbReference type="UniPathway" id="UPA00219"/>
<dbReference type="Proteomes" id="UP000000800">
    <property type="component" value="Chromosome"/>
</dbReference>
<dbReference type="GO" id="GO:0005829">
    <property type="term" value="C:cytosol"/>
    <property type="evidence" value="ECO:0007669"/>
    <property type="project" value="TreeGrafter"/>
</dbReference>
<dbReference type="GO" id="GO:0071949">
    <property type="term" value="F:FAD binding"/>
    <property type="evidence" value="ECO:0007669"/>
    <property type="project" value="InterPro"/>
</dbReference>
<dbReference type="GO" id="GO:0008762">
    <property type="term" value="F:UDP-N-acetylmuramate dehydrogenase activity"/>
    <property type="evidence" value="ECO:0007669"/>
    <property type="project" value="UniProtKB-UniRule"/>
</dbReference>
<dbReference type="GO" id="GO:0051301">
    <property type="term" value="P:cell division"/>
    <property type="evidence" value="ECO:0007669"/>
    <property type="project" value="UniProtKB-KW"/>
</dbReference>
<dbReference type="GO" id="GO:0071555">
    <property type="term" value="P:cell wall organization"/>
    <property type="evidence" value="ECO:0007669"/>
    <property type="project" value="UniProtKB-KW"/>
</dbReference>
<dbReference type="GO" id="GO:0009252">
    <property type="term" value="P:peptidoglycan biosynthetic process"/>
    <property type="evidence" value="ECO:0007669"/>
    <property type="project" value="UniProtKB-UniRule"/>
</dbReference>
<dbReference type="GO" id="GO:0008360">
    <property type="term" value="P:regulation of cell shape"/>
    <property type="evidence" value="ECO:0007669"/>
    <property type="project" value="UniProtKB-KW"/>
</dbReference>
<dbReference type="Gene3D" id="3.30.465.10">
    <property type="match status" value="1"/>
</dbReference>
<dbReference type="Gene3D" id="3.90.78.10">
    <property type="entry name" value="UDP-N-acetylenolpyruvoylglucosamine reductase, C-terminal domain"/>
    <property type="match status" value="1"/>
</dbReference>
<dbReference type="Gene3D" id="3.30.43.10">
    <property type="entry name" value="Uridine Diphospho-n-acetylenolpyruvylglucosamine Reductase, domain 2"/>
    <property type="match status" value="1"/>
</dbReference>
<dbReference type="HAMAP" id="MF_00037">
    <property type="entry name" value="MurB"/>
    <property type="match status" value="1"/>
</dbReference>
<dbReference type="InterPro" id="IPR016166">
    <property type="entry name" value="FAD-bd_PCMH"/>
</dbReference>
<dbReference type="InterPro" id="IPR036318">
    <property type="entry name" value="FAD-bd_PCMH-like_sf"/>
</dbReference>
<dbReference type="InterPro" id="IPR016167">
    <property type="entry name" value="FAD-bd_PCMH_sub1"/>
</dbReference>
<dbReference type="InterPro" id="IPR016169">
    <property type="entry name" value="FAD-bd_PCMH_sub2"/>
</dbReference>
<dbReference type="InterPro" id="IPR003170">
    <property type="entry name" value="MurB"/>
</dbReference>
<dbReference type="InterPro" id="IPR011601">
    <property type="entry name" value="MurB_C"/>
</dbReference>
<dbReference type="InterPro" id="IPR036635">
    <property type="entry name" value="MurB_C_sf"/>
</dbReference>
<dbReference type="InterPro" id="IPR006094">
    <property type="entry name" value="Oxid_FAD_bind_N"/>
</dbReference>
<dbReference type="NCBIfam" id="TIGR00179">
    <property type="entry name" value="murB"/>
    <property type="match status" value="1"/>
</dbReference>
<dbReference type="NCBIfam" id="NF010480">
    <property type="entry name" value="PRK13905.1"/>
    <property type="match status" value="1"/>
</dbReference>
<dbReference type="PANTHER" id="PTHR21071">
    <property type="entry name" value="UDP-N-ACETYLENOLPYRUVOYLGLUCOSAMINE REDUCTASE"/>
    <property type="match status" value="1"/>
</dbReference>
<dbReference type="PANTHER" id="PTHR21071:SF4">
    <property type="entry name" value="UDP-N-ACETYLENOLPYRUVOYLGLUCOSAMINE REDUCTASE"/>
    <property type="match status" value="1"/>
</dbReference>
<dbReference type="Pfam" id="PF01565">
    <property type="entry name" value="FAD_binding_4"/>
    <property type="match status" value="1"/>
</dbReference>
<dbReference type="Pfam" id="PF02873">
    <property type="entry name" value="MurB_C"/>
    <property type="match status" value="1"/>
</dbReference>
<dbReference type="SUPFAM" id="SSF56176">
    <property type="entry name" value="FAD-binding/transporter-associated domain-like"/>
    <property type="match status" value="1"/>
</dbReference>
<dbReference type="SUPFAM" id="SSF56194">
    <property type="entry name" value="Uridine diphospho-N-Acetylenolpyruvylglucosamine reductase, MurB, C-terminal domain"/>
    <property type="match status" value="1"/>
</dbReference>
<dbReference type="PROSITE" id="PS51387">
    <property type="entry name" value="FAD_PCMH"/>
    <property type="match status" value="1"/>
</dbReference>
<protein>
    <recommendedName>
        <fullName>UDP-N-acetylenolpyruvoylglucosamine reductase</fullName>
        <ecNumber>1.3.1.98</ecNumber>
    </recommendedName>
    <alternativeName>
        <fullName>UDP-N-acetylmuramate dehydrogenase</fullName>
    </alternativeName>
</protein>
<accession>Q9PL89</accession>